<organism>
    <name type="scientific">Parasynechococcus marenigrum (strain WH8102)</name>
    <dbReference type="NCBI Taxonomy" id="84588"/>
    <lineage>
        <taxon>Bacteria</taxon>
        <taxon>Bacillati</taxon>
        <taxon>Cyanobacteriota</taxon>
        <taxon>Cyanophyceae</taxon>
        <taxon>Synechococcales</taxon>
        <taxon>Prochlorococcaceae</taxon>
        <taxon>Parasynechococcus</taxon>
        <taxon>Parasynechococcus marenigrum</taxon>
    </lineage>
</organism>
<accession>Q7TTX1</accession>
<protein>
    <recommendedName>
        <fullName evidence="1">Chaperonin GroEL 1</fullName>
        <ecNumber evidence="1">5.6.1.7</ecNumber>
    </recommendedName>
    <alternativeName>
        <fullName evidence="1">60 kDa chaperonin 1</fullName>
    </alternativeName>
    <alternativeName>
        <fullName evidence="1">Chaperonin-60 1</fullName>
        <shortName evidence="1">Cpn60 1</shortName>
    </alternativeName>
</protein>
<sequence>MAKRIIYNENARRALEKGIDILAESVAVTLGPKGRNVVLEKKFGAPQIINDGVTIAKEIELEDHIENTGVALIRQAASKTNDAAGDGTTTATVLAHAMVKAGLRNVAAGANAITLKKGIDKASDFLVSKIKEQAKPIADSNAIAQVGTISAGNDEEVGKMIADAMDKVGKEGVISLEEGKSMETELEVTEGMRFDKGYISPYFATDTERMEAVLDEPYILLTDKKIGLVQDLVPVLEQIARTGKPLMIIAEDIEKEALATLVVNRLRGVLNVAAVKAPGFGDRRKAMLEDMAVLTNGQLITEDAGLKLENAKLEMLGTARRVTINKDTTTIVAEGNEAAVGARCEQIKKQMDETDSTYDKEKLQERLAKLAGGVAVVKVGAATETEMKDKKLRLEDAINATKAAVEEGIVPGGGTTLAHLAPSLEEWANGNLSGEELIGANIVAAALTAPLMRIAENAGANGAVVAENVKSRAISEGYNAATGDYVDMLAAGIVDPAKVTRSGLQNAASIAGMVLTTECIVADLPEKKDAAPAGGGMGGGDFDY</sequence>
<gene>
    <name evidence="1" type="primary">groEL1</name>
    <name evidence="1" type="synonym">groL1</name>
    <name type="ordered locus">SYNW0514</name>
</gene>
<proteinExistence type="inferred from homology"/>
<name>CH601_PARMW</name>
<dbReference type="EC" id="5.6.1.7" evidence="1"/>
<dbReference type="EMBL" id="BX569690">
    <property type="protein sequence ID" value="CAE07029.1"/>
    <property type="molecule type" value="Genomic_DNA"/>
</dbReference>
<dbReference type="RefSeq" id="WP_011127385.1">
    <property type="nucleotide sequence ID" value="NC_005070.1"/>
</dbReference>
<dbReference type="SMR" id="Q7TTX1"/>
<dbReference type="STRING" id="84588.SYNW0514"/>
<dbReference type="KEGG" id="syw:SYNW0514"/>
<dbReference type="eggNOG" id="COG0459">
    <property type="taxonomic scope" value="Bacteria"/>
</dbReference>
<dbReference type="HOGENOM" id="CLU_016503_3_0_3"/>
<dbReference type="Proteomes" id="UP000001422">
    <property type="component" value="Chromosome"/>
</dbReference>
<dbReference type="GO" id="GO:0005737">
    <property type="term" value="C:cytoplasm"/>
    <property type="evidence" value="ECO:0007669"/>
    <property type="project" value="UniProtKB-SubCell"/>
</dbReference>
<dbReference type="GO" id="GO:0005524">
    <property type="term" value="F:ATP binding"/>
    <property type="evidence" value="ECO:0007669"/>
    <property type="project" value="UniProtKB-UniRule"/>
</dbReference>
<dbReference type="GO" id="GO:0140662">
    <property type="term" value="F:ATP-dependent protein folding chaperone"/>
    <property type="evidence" value="ECO:0007669"/>
    <property type="project" value="InterPro"/>
</dbReference>
<dbReference type="GO" id="GO:0016853">
    <property type="term" value="F:isomerase activity"/>
    <property type="evidence" value="ECO:0007669"/>
    <property type="project" value="UniProtKB-KW"/>
</dbReference>
<dbReference type="GO" id="GO:0051082">
    <property type="term" value="F:unfolded protein binding"/>
    <property type="evidence" value="ECO:0007669"/>
    <property type="project" value="UniProtKB-UniRule"/>
</dbReference>
<dbReference type="GO" id="GO:0042026">
    <property type="term" value="P:protein refolding"/>
    <property type="evidence" value="ECO:0007669"/>
    <property type="project" value="UniProtKB-UniRule"/>
</dbReference>
<dbReference type="CDD" id="cd03344">
    <property type="entry name" value="GroEL"/>
    <property type="match status" value="1"/>
</dbReference>
<dbReference type="FunFam" id="3.50.7.10:FF:000001">
    <property type="entry name" value="60 kDa chaperonin"/>
    <property type="match status" value="1"/>
</dbReference>
<dbReference type="Gene3D" id="3.50.7.10">
    <property type="entry name" value="GroEL"/>
    <property type="match status" value="1"/>
</dbReference>
<dbReference type="Gene3D" id="1.10.560.10">
    <property type="entry name" value="GroEL-like equatorial domain"/>
    <property type="match status" value="1"/>
</dbReference>
<dbReference type="Gene3D" id="3.30.260.10">
    <property type="entry name" value="TCP-1-like chaperonin intermediate domain"/>
    <property type="match status" value="1"/>
</dbReference>
<dbReference type="HAMAP" id="MF_00600">
    <property type="entry name" value="CH60"/>
    <property type="match status" value="1"/>
</dbReference>
<dbReference type="InterPro" id="IPR018370">
    <property type="entry name" value="Chaperonin_Cpn60_CS"/>
</dbReference>
<dbReference type="InterPro" id="IPR001844">
    <property type="entry name" value="Cpn60/GroEL"/>
</dbReference>
<dbReference type="InterPro" id="IPR002423">
    <property type="entry name" value="Cpn60/GroEL/TCP-1"/>
</dbReference>
<dbReference type="InterPro" id="IPR027409">
    <property type="entry name" value="GroEL-like_apical_dom_sf"/>
</dbReference>
<dbReference type="InterPro" id="IPR027413">
    <property type="entry name" value="GROEL-like_equatorial_sf"/>
</dbReference>
<dbReference type="InterPro" id="IPR027410">
    <property type="entry name" value="TCP-1-like_intermed_sf"/>
</dbReference>
<dbReference type="NCBIfam" id="TIGR02348">
    <property type="entry name" value="GroEL"/>
    <property type="match status" value="1"/>
</dbReference>
<dbReference type="NCBIfam" id="NF000592">
    <property type="entry name" value="PRK00013.1"/>
    <property type="match status" value="1"/>
</dbReference>
<dbReference type="NCBIfam" id="NF009487">
    <property type="entry name" value="PRK12849.1"/>
    <property type="match status" value="1"/>
</dbReference>
<dbReference type="NCBIfam" id="NF009488">
    <property type="entry name" value="PRK12850.1"/>
    <property type="match status" value="1"/>
</dbReference>
<dbReference type="NCBIfam" id="NF009489">
    <property type="entry name" value="PRK12851.1"/>
    <property type="match status" value="1"/>
</dbReference>
<dbReference type="PANTHER" id="PTHR45633">
    <property type="entry name" value="60 KDA HEAT SHOCK PROTEIN, MITOCHONDRIAL"/>
    <property type="match status" value="1"/>
</dbReference>
<dbReference type="Pfam" id="PF00118">
    <property type="entry name" value="Cpn60_TCP1"/>
    <property type="match status" value="1"/>
</dbReference>
<dbReference type="PRINTS" id="PR00298">
    <property type="entry name" value="CHAPERONIN60"/>
</dbReference>
<dbReference type="SUPFAM" id="SSF52029">
    <property type="entry name" value="GroEL apical domain-like"/>
    <property type="match status" value="1"/>
</dbReference>
<dbReference type="SUPFAM" id="SSF48592">
    <property type="entry name" value="GroEL equatorial domain-like"/>
    <property type="match status" value="2"/>
</dbReference>
<dbReference type="PROSITE" id="PS00296">
    <property type="entry name" value="CHAPERONINS_CPN60"/>
    <property type="match status" value="1"/>
</dbReference>
<evidence type="ECO:0000255" key="1">
    <source>
        <dbReference type="HAMAP-Rule" id="MF_00600"/>
    </source>
</evidence>
<feature type="chain" id="PRO_0000063570" description="Chaperonin GroEL 1">
    <location>
        <begin position="1"/>
        <end position="544"/>
    </location>
</feature>
<feature type="binding site" evidence="1">
    <location>
        <begin position="29"/>
        <end position="32"/>
    </location>
    <ligand>
        <name>ATP</name>
        <dbReference type="ChEBI" id="CHEBI:30616"/>
    </ligand>
</feature>
<feature type="binding site" evidence="1">
    <location>
        <begin position="86"/>
        <end position="90"/>
    </location>
    <ligand>
        <name>ATP</name>
        <dbReference type="ChEBI" id="CHEBI:30616"/>
    </ligand>
</feature>
<feature type="binding site" evidence="1">
    <location>
        <position position="413"/>
    </location>
    <ligand>
        <name>ATP</name>
        <dbReference type="ChEBI" id="CHEBI:30616"/>
    </ligand>
</feature>
<feature type="binding site" evidence="1">
    <location>
        <begin position="479"/>
        <end position="481"/>
    </location>
    <ligand>
        <name>ATP</name>
        <dbReference type="ChEBI" id="CHEBI:30616"/>
    </ligand>
</feature>
<feature type="binding site" evidence="1">
    <location>
        <position position="495"/>
    </location>
    <ligand>
        <name>ATP</name>
        <dbReference type="ChEBI" id="CHEBI:30616"/>
    </ligand>
</feature>
<comment type="function">
    <text evidence="1">Together with its co-chaperonin GroES, plays an essential role in assisting protein folding. The GroEL-GroES system forms a nano-cage that allows encapsulation of the non-native substrate proteins and provides a physical environment optimized to promote and accelerate protein folding.</text>
</comment>
<comment type="catalytic activity">
    <reaction evidence="1">
        <text>ATP + H2O + a folded polypeptide = ADP + phosphate + an unfolded polypeptide.</text>
        <dbReference type="EC" id="5.6.1.7"/>
    </reaction>
</comment>
<comment type="subunit">
    <text evidence="1">Forms a cylinder of 14 subunits composed of two heptameric rings stacked back-to-back. Interacts with the co-chaperonin GroES.</text>
</comment>
<comment type="subcellular location">
    <subcellularLocation>
        <location evidence="1">Cytoplasm</location>
    </subcellularLocation>
</comment>
<comment type="similarity">
    <text evidence="1">Belongs to the chaperonin (HSP60) family.</text>
</comment>
<reference key="1">
    <citation type="journal article" date="2003" name="Nature">
        <title>The genome of a motile marine Synechococcus.</title>
        <authorList>
            <person name="Palenik B."/>
            <person name="Brahamsha B."/>
            <person name="Larimer F.W."/>
            <person name="Land M.L."/>
            <person name="Hauser L."/>
            <person name="Chain P."/>
            <person name="Lamerdin J.E."/>
            <person name="Regala W."/>
            <person name="Allen E.E."/>
            <person name="McCarren J."/>
            <person name="Paulsen I.T."/>
            <person name="Dufresne A."/>
            <person name="Partensky F."/>
            <person name="Webb E.A."/>
            <person name="Waterbury J."/>
        </authorList>
    </citation>
    <scope>NUCLEOTIDE SEQUENCE [LARGE SCALE GENOMIC DNA]</scope>
    <source>
        <strain>WH8102</strain>
    </source>
</reference>
<keyword id="KW-0067">ATP-binding</keyword>
<keyword id="KW-0143">Chaperone</keyword>
<keyword id="KW-0963">Cytoplasm</keyword>
<keyword id="KW-0413">Isomerase</keyword>
<keyword id="KW-0547">Nucleotide-binding</keyword>